<protein>
    <recommendedName>
        <fullName>Thyroid receptor-interacting protein 6</fullName>
        <shortName>TR-interacting protein 6</shortName>
        <shortName>TRIP-6</shortName>
    </recommendedName>
</protein>
<sequence length="481" mass="50883">MSGPTWLPPKQPEPARAPQGRALPRGASGPPLAHGAALQPHPRVNFCPLPSEQCYQTPGEPEDRGLAWVGCHGAPQHSQGLPPDRGGLRPGSLDAEIDSLTSMLAELDGGRGHAPRRPDRQAYEPPEPPAYRSGSGPLRPNGGALPPPPLPGSPYGAPTPASYATASTPAGPAFPVQVKVARPVRGCGPPRRGASQASGPSPGPHFPLPGRGEVWGAGYRSHREPGPGVKEEAPGVSGPAGARGGGYGPQVPLSQPPEEELERLTKKLVHDMNHPPSGEYFGRCGGCGEDVVGDGAGVVALDRVFHVGCFVCSTCRAQLRGQHFYAVERRAYCESCYVATLEKCSTCSQPILDRILRAMGKAYHPGCFTCVVCHRGLDGIPFTVDATSQIHCIEDFHRKFAPRCSVCGGAIMPEPGQEETVRIVALDRSFHIGCYKCEECGLLLSSEGECQGCYPLDGHILCKTCSAWRIQELSATVTTDC</sequence>
<evidence type="ECO:0000250" key="1"/>
<evidence type="ECO:0000250" key="2">
    <source>
        <dbReference type="UniProtKB" id="Q15654"/>
    </source>
</evidence>
<evidence type="ECO:0000250" key="3">
    <source>
        <dbReference type="UniProtKB" id="Q9Z1Y4"/>
    </source>
</evidence>
<evidence type="ECO:0000255" key="4">
    <source>
        <dbReference type="PROSITE-ProRule" id="PRU00125"/>
    </source>
</evidence>
<evidence type="ECO:0000256" key="5">
    <source>
        <dbReference type="SAM" id="MobiDB-lite"/>
    </source>
</evidence>
<evidence type="ECO:0000305" key="6"/>
<dbReference type="EMBL" id="BC104544">
    <property type="protein sequence ID" value="AAI04545.1"/>
    <property type="molecule type" value="mRNA"/>
</dbReference>
<dbReference type="RefSeq" id="NP_001030546.1">
    <property type="nucleotide sequence ID" value="NM_001035469.1"/>
</dbReference>
<dbReference type="SMR" id="Q3SX26"/>
<dbReference type="FunCoup" id="Q3SX26">
    <property type="interactions" value="1002"/>
</dbReference>
<dbReference type="STRING" id="9913.ENSBTAP00000001503"/>
<dbReference type="PaxDb" id="9913-ENSBTAP00000001503"/>
<dbReference type="PeptideAtlas" id="Q3SX26"/>
<dbReference type="Ensembl" id="ENSBTAT00000001503.5">
    <property type="protein sequence ID" value="ENSBTAP00000001503.3"/>
    <property type="gene ID" value="ENSBTAG00000024772.4"/>
</dbReference>
<dbReference type="GeneID" id="615869"/>
<dbReference type="KEGG" id="bta:615869"/>
<dbReference type="CTD" id="7205"/>
<dbReference type="VEuPathDB" id="HostDB:ENSBTAG00000024772"/>
<dbReference type="VGNC" id="VGNC:107000">
    <property type="gene designation" value="TRIP6"/>
</dbReference>
<dbReference type="eggNOG" id="KOG1701">
    <property type="taxonomic scope" value="Eukaryota"/>
</dbReference>
<dbReference type="GeneTree" id="ENSGT00940000154273"/>
<dbReference type="HOGENOM" id="CLU_001357_10_1_1"/>
<dbReference type="InParanoid" id="Q3SX26"/>
<dbReference type="OMA" id="DRGCLRP"/>
<dbReference type="OrthoDB" id="25414at2759"/>
<dbReference type="TreeFam" id="TF320310"/>
<dbReference type="Proteomes" id="UP000009136">
    <property type="component" value="Chromosome 25"/>
</dbReference>
<dbReference type="Bgee" id="ENSBTAG00000024772">
    <property type="expression patterns" value="Expressed in vas deferens and 100 other cell types or tissues"/>
</dbReference>
<dbReference type="GO" id="GO:0005737">
    <property type="term" value="C:cytoplasm"/>
    <property type="evidence" value="ECO:0000318"/>
    <property type="project" value="GO_Central"/>
</dbReference>
<dbReference type="GO" id="GO:0005856">
    <property type="term" value="C:cytoskeleton"/>
    <property type="evidence" value="ECO:0000250"/>
    <property type="project" value="UniProtKB"/>
</dbReference>
<dbReference type="GO" id="GO:0005829">
    <property type="term" value="C:cytosol"/>
    <property type="evidence" value="ECO:0007669"/>
    <property type="project" value="Ensembl"/>
</dbReference>
<dbReference type="GO" id="GO:0005925">
    <property type="term" value="C:focal adhesion"/>
    <property type="evidence" value="ECO:0000250"/>
    <property type="project" value="UniProtKB"/>
</dbReference>
<dbReference type="GO" id="GO:0005634">
    <property type="term" value="C:nucleus"/>
    <property type="evidence" value="ECO:0000250"/>
    <property type="project" value="UniProtKB"/>
</dbReference>
<dbReference type="GO" id="GO:0005886">
    <property type="term" value="C:plasma membrane"/>
    <property type="evidence" value="ECO:0007669"/>
    <property type="project" value="Ensembl"/>
</dbReference>
<dbReference type="GO" id="GO:0001725">
    <property type="term" value="C:stress fiber"/>
    <property type="evidence" value="ECO:0000318"/>
    <property type="project" value="GO_Central"/>
</dbReference>
<dbReference type="GO" id="GO:0005149">
    <property type="term" value="F:interleukin-1 receptor binding"/>
    <property type="evidence" value="ECO:0000250"/>
    <property type="project" value="UniProtKB"/>
</dbReference>
<dbReference type="GO" id="GO:0019900">
    <property type="term" value="F:kinase binding"/>
    <property type="evidence" value="ECO:0000250"/>
    <property type="project" value="UniProtKB"/>
</dbReference>
<dbReference type="GO" id="GO:0046872">
    <property type="term" value="F:metal ion binding"/>
    <property type="evidence" value="ECO:0007669"/>
    <property type="project" value="UniProtKB-KW"/>
</dbReference>
<dbReference type="GO" id="GO:0007155">
    <property type="term" value="P:cell adhesion"/>
    <property type="evidence" value="ECO:0007669"/>
    <property type="project" value="UniProtKB-KW"/>
</dbReference>
<dbReference type="GO" id="GO:0043009">
    <property type="term" value="P:chordate embryonic development"/>
    <property type="evidence" value="ECO:0007669"/>
    <property type="project" value="Ensembl"/>
</dbReference>
<dbReference type="GO" id="GO:0030335">
    <property type="term" value="P:positive regulation of cell migration"/>
    <property type="evidence" value="ECO:0000250"/>
    <property type="project" value="UniProtKB"/>
</dbReference>
<dbReference type="GO" id="GO:1901224">
    <property type="term" value="P:positive regulation of non-canonical NF-kappaB signal transduction"/>
    <property type="evidence" value="ECO:0000250"/>
    <property type="project" value="UniProtKB"/>
</dbReference>
<dbReference type="GO" id="GO:0007165">
    <property type="term" value="P:signal transduction"/>
    <property type="evidence" value="ECO:0000318"/>
    <property type="project" value="GO_Central"/>
</dbReference>
<dbReference type="CDD" id="cd09350">
    <property type="entry name" value="LIM1_TRIP6"/>
    <property type="match status" value="1"/>
</dbReference>
<dbReference type="CDD" id="cd09357">
    <property type="entry name" value="LIM3_Zyxin_like"/>
    <property type="match status" value="1"/>
</dbReference>
<dbReference type="FunFam" id="2.10.110.10:FF:000027">
    <property type="entry name" value="lipoma-preferred partner isoform X1"/>
    <property type="match status" value="1"/>
</dbReference>
<dbReference type="FunFam" id="2.10.110.10:FF:000042">
    <property type="entry name" value="lipoma-preferred partner isoform X1"/>
    <property type="match status" value="1"/>
</dbReference>
<dbReference type="FunFam" id="2.10.110.10:FF:000047">
    <property type="entry name" value="lipoma-preferred partner isoform X1"/>
    <property type="match status" value="1"/>
</dbReference>
<dbReference type="Gene3D" id="2.10.110.10">
    <property type="entry name" value="Cysteine Rich Protein"/>
    <property type="match status" value="3"/>
</dbReference>
<dbReference type="InterPro" id="IPR001781">
    <property type="entry name" value="Znf_LIM"/>
</dbReference>
<dbReference type="PANTHER" id="PTHR24212:SF7">
    <property type="entry name" value="THYROID RECEPTOR-INTERACTING PROTEIN 6"/>
    <property type="match status" value="1"/>
</dbReference>
<dbReference type="PANTHER" id="PTHR24212">
    <property type="entry name" value="ZYXIN/TRIP6"/>
    <property type="match status" value="1"/>
</dbReference>
<dbReference type="Pfam" id="PF00412">
    <property type="entry name" value="LIM"/>
    <property type="match status" value="3"/>
</dbReference>
<dbReference type="SMART" id="SM00132">
    <property type="entry name" value="LIM"/>
    <property type="match status" value="3"/>
</dbReference>
<dbReference type="SUPFAM" id="SSF57716">
    <property type="entry name" value="Glucocorticoid receptor-like (DNA-binding domain)"/>
    <property type="match status" value="3"/>
</dbReference>
<dbReference type="PROSITE" id="PS00478">
    <property type="entry name" value="LIM_DOMAIN_1"/>
    <property type="match status" value="2"/>
</dbReference>
<dbReference type="PROSITE" id="PS50023">
    <property type="entry name" value="LIM_DOMAIN_2"/>
    <property type="match status" value="3"/>
</dbReference>
<proteinExistence type="evidence at transcript level"/>
<accession>Q3SX26</accession>
<organism>
    <name type="scientific">Bos taurus</name>
    <name type="common">Bovine</name>
    <dbReference type="NCBI Taxonomy" id="9913"/>
    <lineage>
        <taxon>Eukaryota</taxon>
        <taxon>Metazoa</taxon>
        <taxon>Chordata</taxon>
        <taxon>Craniata</taxon>
        <taxon>Vertebrata</taxon>
        <taxon>Euteleostomi</taxon>
        <taxon>Mammalia</taxon>
        <taxon>Eutheria</taxon>
        <taxon>Laurasiatheria</taxon>
        <taxon>Artiodactyla</taxon>
        <taxon>Ruminantia</taxon>
        <taxon>Pecora</taxon>
        <taxon>Bovidae</taxon>
        <taxon>Bovinae</taxon>
        <taxon>Bos</taxon>
    </lineage>
</organism>
<gene>
    <name type="primary">TRIP6</name>
</gene>
<feature type="chain" id="PRO_0000245358" description="Thyroid receptor-interacting protein 6">
    <location>
        <begin position="1"/>
        <end position="481"/>
    </location>
</feature>
<feature type="domain" description="LIM zinc-binding 1" evidence="4">
    <location>
        <begin position="284"/>
        <end position="321"/>
    </location>
</feature>
<feature type="domain" description="LIM zinc-binding 2" evidence="4">
    <location>
        <begin position="344"/>
        <end position="403"/>
    </location>
</feature>
<feature type="domain" description="LIM zinc-binding 3" evidence="4">
    <location>
        <begin position="404"/>
        <end position="472"/>
    </location>
</feature>
<feature type="region of interest" description="Disordered" evidence="5">
    <location>
        <begin position="1"/>
        <end position="259"/>
    </location>
</feature>
<feature type="region of interest" description="Interaction with MAGI1 and PTPN13" evidence="1">
    <location>
        <begin position="474"/>
        <end position="481"/>
    </location>
</feature>
<feature type="compositionally biased region" description="Pro residues" evidence="5">
    <location>
        <begin position="1"/>
        <end position="12"/>
    </location>
</feature>
<feature type="compositionally biased region" description="Basic and acidic residues" evidence="5">
    <location>
        <begin position="108"/>
        <end position="122"/>
    </location>
</feature>
<feature type="compositionally biased region" description="Low complexity" evidence="5">
    <location>
        <begin position="153"/>
        <end position="173"/>
    </location>
</feature>
<feature type="compositionally biased region" description="Low complexity" evidence="5">
    <location>
        <begin position="183"/>
        <end position="193"/>
    </location>
</feature>
<feature type="compositionally biased region" description="Basic and acidic residues" evidence="5">
    <location>
        <begin position="221"/>
        <end position="233"/>
    </location>
</feature>
<feature type="modified residue" description="Asymmetric dimethylarginine; alternate" evidence="3">
    <location>
        <position position="25"/>
    </location>
</feature>
<feature type="modified residue" description="Omega-N-methylarginine; alternate" evidence="2">
    <location>
        <position position="25"/>
    </location>
</feature>
<feature type="modified residue" description="Phosphotyrosine; by SRC" evidence="2">
    <location>
        <position position="55"/>
    </location>
</feature>
<feature type="modified residue" description="Phosphoserine" evidence="2">
    <location>
        <position position="92"/>
    </location>
</feature>
<feature type="modified residue" description="Omega-N-methylarginine" evidence="2">
    <location>
        <position position="111"/>
    </location>
</feature>
<feature type="modified residue" description="Omega-N-methylarginine" evidence="2">
    <location>
        <position position="185"/>
    </location>
</feature>
<feature type="modified residue" description="Omega-N-methylarginine" evidence="2">
    <location>
        <position position="192"/>
    </location>
</feature>
<feature type="modified residue" description="Phosphoserine" evidence="2">
    <location>
        <position position="195"/>
    </location>
</feature>
<feature type="modified residue" description="Omega-N-methylarginine" evidence="2">
    <location>
        <position position="211"/>
    </location>
</feature>
<feature type="modified residue" description="Omega-N-methylarginine" evidence="2">
    <location>
        <position position="243"/>
    </location>
</feature>
<feature type="modified residue" description="Phosphoserine" evidence="2">
    <location>
        <position position="254"/>
    </location>
</feature>
<keyword id="KW-0130">Cell adhesion</keyword>
<keyword id="KW-0965">Cell junction</keyword>
<keyword id="KW-0963">Cytoplasm</keyword>
<keyword id="KW-0206">Cytoskeleton</keyword>
<keyword id="KW-0440">LIM domain</keyword>
<keyword id="KW-0479">Metal-binding</keyword>
<keyword id="KW-0488">Methylation</keyword>
<keyword id="KW-0539">Nucleus</keyword>
<keyword id="KW-0597">Phosphoprotein</keyword>
<keyword id="KW-1185">Reference proteome</keyword>
<keyword id="KW-0677">Repeat</keyword>
<keyword id="KW-0804">Transcription</keyword>
<keyword id="KW-0805">Transcription regulation</keyword>
<keyword id="KW-0862">Zinc</keyword>
<reference key="1">
    <citation type="submission" date="2005-09" db="EMBL/GenBank/DDBJ databases">
        <authorList>
            <consortium name="NIH - Mammalian Gene Collection (MGC) project"/>
        </authorList>
    </citation>
    <scope>NUCLEOTIDE SEQUENCE [LARGE SCALE MRNA]</scope>
    <source>
        <strain>Hereford</strain>
        <tissue>Uterus</tissue>
    </source>
</reference>
<name>TRIP6_BOVIN</name>
<comment type="function">
    <text evidence="1">Relays signals from the cell surface to the nucleus to weaken adherens junction and promote actin cytoskeleton reorganization and cell invasiveness. Involved in lysophosphatidic acid-induced cell adhesion and migration. Acts as a transcriptional coactivator for NF-kappa-B and JUN, and mediates the transrepression of these transcription factors induced by glucocorticoid receptor (By similarity).</text>
</comment>
<comment type="subunit">
    <text evidence="2 3">Specifically interacts with the ligand binding domain of the thyroid receptor (TR) in the presence of thyroid hormone (By similarity). Interacts (via the third LIM domain and C-terminus) with PTPN13 (via the second PDZ domain). Interacts (via the second LIM domain or via the third LIM domain plus C-terminus) with PDLIM4 (via PDZ domain). Found in a complex with PTPN13 and PDLIM4 (By similarity). Interacts with SVIL isoform 2. Interacts with LPAR2 but not other LPA receptors. Interacts with PRKAA2. Interacts with MAGI1. Interacts with SCRIB (By similarity).</text>
</comment>
<comment type="subcellular location">
    <subcellularLocation>
        <location evidence="2">Cytoplasm</location>
        <location evidence="2">Cytoskeleton</location>
    </subcellularLocation>
    <subcellularLocation>
        <location evidence="2">Cell junction</location>
        <location evidence="2">Focal adhesion</location>
    </subcellularLocation>
    <subcellularLocation>
        <location evidence="2">Nucleus</location>
    </subcellularLocation>
    <subcellularLocation>
        <location evidence="2">Cytoplasm</location>
    </subcellularLocation>
    <text evidence="2">Shuttles between nucleus and cytoplasm. Colocalizes with actin.</text>
</comment>
<comment type="domain">
    <text evidence="1">The LIM zinc-binding domains mediate interaction with LPAR2.</text>
</comment>
<comment type="PTM">
    <text evidence="1">Phosphorylation at Tyr-55 by SRC is required for enhancement of lysophosphatidic acid-induced cell migration. Tyr-55 is dephosphorylated by PTPN13 (By similarity).</text>
</comment>
<comment type="similarity">
    <text evidence="6">Belongs to the zyxin/ajuba family.</text>
</comment>